<gene>
    <name type="primary">DEPDC7</name>
</gene>
<feature type="chain" id="PRO_0000307740" description="DEP domain-containing protein 7">
    <location>
        <begin position="1"/>
        <end position="511"/>
    </location>
</feature>
<feature type="domain" description="DEP" evidence="1">
    <location>
        <begin position="46"/>
        <end position="136"/>
    </location>
</feature>
<accession>Q5R8B7</accession>
<sequence length="511" mass="58250">MATVQEKAAALNLSALHSPAHRPPGFSVAQKPFGATYVWSSIINTLQTQVEVKKRRHRLKRHNDCFVGSEAVDVIFSHLIQNKYFGDVDIPRAKVVRVCQALMDYKVFEAVPTKVFGKDKKPTFEDSSCSLYRFTTIPNQDSQSGRVNKLYSPARYADALFKSSDIKSASLEDLWENLSLKPANSPHVNISATLSPQVINEVWQEETIGRLLQLVDLPLLDSLLKQQEAVPKVPQPKRQSTIVNSSNYLDRGILKAYSDSQEDEWLSAAIDCLEYLPDQMVVEISRSFPEQPDRTDLVKELLFDAIGRYYSSREPLLNHLSDVHNGIAELLVNGKTEIALEATQLLLKLLDFQNREEFRRLLYFMAVAANPSEFKLQKESDNRMIVKRIFSKAIVDNKNLSKGKTDLLVLFLMDHQKDVFKIPGTLHKIVSVKLMAIQNGRDPNRDAGYIYCQRIEQRDYSNNTEKTTKDELLNLLKTIDEDSKLSAKEKKKLLGQFYKCHPDIFIEHFGD</sequence>
<proteinExistence type="evidence at transcript level"/>
<keyword id="KW-1185">Reference proteome</keyword>
<reference key="1">
    <citation type="submission" date="2004-11" db="EMBL/GenBank/DDBJ databases">
        <authorList>
            <consortium name="The German cDNA consortium"/>
        </authorList>
    </citation>
    <scope>NUCLEOTIDE SEQUENCE [LARGE SCALE MRNA]</scope>
    <source>
        <tissue>Kidney</tissue>
    </source>
</reference>
<name>DEPD7_PONAB</name>
<dbReference type="EMBL" id="CR859836">
    <property type="protein sequence ID" value="CAH91993.1"/>
    <property type="molecule type" value="mRNA"/>
</dbReference>
<dbReference type="RefSeq" id="NP_001126157.1">
    <property type="nucleotide sequence ID" value="NM_001132685.1"/>
</dbReference>
<dbReference type="SMR" id="Q5R8B7"/>
<dbReference type="FunCoup" id="Q5R8B7">
    <property type="interactions" value="151"/>
</dbReference>
<dbReference type="STRING" id="9601.ENSPPYP00000003878"/>
<dbReference type="GeneID" id="100173116"/>
<dbReference type="KEGG" id="pon:100173116"/>
<dbReference type="CTD" id="91614"/>
<dbReference type="eggNOG" id="ENOG502QW4D">
    <property type="taxonomic scope" value="Eukaryota"/>
</dbReference>
<dbReference type="InParanoid" id="Q5R8B7"/>
<dbReference type="OrthoDB" id="276323at2759"/>
<dbReference type="Proteomes" id="UP000001595">
    <property type="component" value="Unplaced"/>
</dbReference>
<dbReference type="GO" id="GO:0035556">
    <property type="term" value="P:intracellular signal transduction"/>
    <property type="evidence" value="ECO:0007669"/>
    <property type="project" value="InterPro"/>
</dbReference>
<dbReference type="CDD" id="cd04446">
    <property type="entry name" value="DEP_DEPDC4"/>
    <property type="match status" value="1"/>
</dbReference>
<dbReference type="CDD" id="cd04405">
    <property type="entry name" value="RhoGAP_BRCC3-like"/>
    <property type="match status" value="1"/>
</dbReference>
<dbReference type="FunFam" id="1.10.10.10:FF:000326">
    <property type="entry name" value="DEP domain-containing protein 7"/>
    <property type="match status" value="1"/>
</dbReference>
<dbReference type="Gene3D" id="1.10.10.10">
    <property type="entry name" value="Winged helix-like DNA-binding domain superfamily/Winged helix DNA-binding domain"/>
    <property type="match status" value="1"/>
</dbReference>
<dbReference type="InterPro" id="IPR000591">
    <property type="entry name" value="DEP_dom"/>
</dbReference>
<dbReference type="InterPro" id="IPR036388">
    <property type="entry name" value="WH-like_DNA-bd_sf"/>
</dbReference>
<dbReference type="InterPro" id="IPR036390">
    <property type="entry name" value="WH_DNA-bd_sf"/>
</dbReference>
<dbReference type="PANTHER" id="PTHR16206">
    <property type="entry name" value="DEP DOMAIN-CONTAINING"/>
    <property type="match status" value="1"/>
</dbReference>
<dbReference type="PANTHER" id="PTHR16206:SF9">
    <property type="entry name" value="DEP DOMAIN-CONTAINING PROTEIN 7"/>
    <property type="match status" value="1"/>
</dbReference>
<dbReference type="Pfam" id="PF00610">
    <property type="entry name" value="DEP"/>
    <property type="match status" value="1"/>
</dbReference>
<dbReference type="SMART" id="SM00049">
    <property type="entry name" value="DEP"/>
    <property type="match status" value="1"/>
</dbReference>
<dbReference type="SUPFAM" id="SSF46785">
    <property type="entry name" value="Winged helix' DNA-binding domain"/>
    <property type="match status" value="1"/>
</dbReference>
<dbReference type="PROSITE" id="PS50186">
    <property type="entry name" value="DEP"/>
    <property type="match status" value="1"/>
</dbReference>
<evidence type="ECO:0000255" key="1">
    <source>
        <dbReference type="PROSITE-ProRule" id="PRU00066"/>
    </source>
</evidence>
<evidence type="ECO:0000305" key="2"/>
<comment type="similarity">
    <text evidence="2">Belongs to the DEPDC7 family.</text>
</comment>
<protein>
    <recommendedName>
        <fullName>DEP domain-containing protein 7</fullName>
    </recommendedName>
</protein>
<organism>
    <name type="scientific">Pongo abelii</name>
    <name type="common">Sumatran orangutan</name>
    <name type="synonym">Pongo pygmaeus abelii</name>
    <dbReference type="NCBI Taxonomy" id="9601"/>
    <lineage>
        <taxon>Eukaryota</taxon>
        <taxon>Metazoa</taxon>
        <taxon>Chordata</taxon>
        <taxon>Craniata</taxon>
        <taxon>Vertebrata</taxon>
        <taxon>Euteleostomi</taxon>
        <taxon>Mammalia</taxon>
        <taxon>Eutheria</taxon>
        <taxon>Euarchontoglires</taxon>
        <taxon>Primates</taxon>
        <taxon>Haplorrhini</taxon>
        <taxon>Catarrhini</taxon>
        <taxon>Hominidae</taxon>
        <taxon>Pongo</taxon>
    </lineage>
</organism>